<protein>
    <recommendedName>
        <fullName evidence="1">Nucleoside diphosphate kinase</fullName>
        <shortName evidence="1">NDK</shortName>
        <shortName evidence="1">NDP kinase</shortName>
        <ecNumber evidence="1">2.7.4.6</ecNumber>
    </recommendedName>
    <alternativeName>
        <fullName evidence="1">Nucleoside-2-P kinase</fullName>
    </alternativeName>
</protein>
<dbReference type="EC" id="2.7.4.6" evidence="1"/>
<dbReference type="EMBL" id="CP001150">
    <property type="protein sequence ID" value="ACM01070.1"/>
    <property type="molecule type" value="Genomic_DNA"/>
</dbReference>
<dbReference type="RefSeq" id="WP_002720049.1">
    <property type="nucleotide sequence ID" value="NC_011963.1"/>
</dbReference>
<dbReference type="SMR" id="B9KSS4"/>
<dbReference type="GeneID" id="67446634"/>
<dbReference type="KEGG" id="rsk:RSKD131_1210"/>
<dbReference type="HOGENOM" id="CLU_060216_8_1_5"/>
<dbReference type="GO" id="GO:0005737">
    <property type="term" value="C:cytoplasm"/>
    <property type="evidence" value="ECO:0007669"/>
    <property type="project" value="UniProtKB-SubCell"/>
</dbReference>
<dbReference type="GO" id="GO:0005524">
    <property type="term" value="F:ATP binding"/>
    <property type="evidence" value="ECO:0007669"/>
    <property type="project" value="UniProtKB-UniRule"/>
</dbReference>
<dbReference type="GO" id="GO:0046872">
    <property type="term" value="F:metal ion binding"/>
    <property type="evidence" value="ECO:0007669"/>
    <property type="project" value="UniProtKB-KW"/>
</dbReference>
<dbReference type="GO" id="GO:0004550">
    <property type="term" value="F:nucleoside diphosphate kinase activity"/>
    <property type="evidence" value="ECO:0007669"/>
    <property type="project" value="UniProtKB-UniRule"/>
</dbReference>
<dbReference type="GO" id="GO:0006241">
    <property type="term" value="P:CTP biosynthetic process"/>
    <property type="evidence" value="ECO:0007669"/>
    <property type="project" value="UniProtKB-UniRule"/>
</dbReference>
<dbReference type="GO" id="GO:0006183">
    <property type="term" value="P:GTP biosynthetic process"/>
    <property type="evidence" value="ECO:0007669"/>
    <property type="project" value="UniProtKB-UniRule"/>
</dbReference>
<dbReference type="GO" id="GO:0006228">
    <property type="term" value="P:UTP biosynthetic process"/>
    <property type="evidence" value="ECO:0007669"/>
    <property type="project" value="UniProtKB-UniRule"/>
</dbReference>
<dbReference type="CDD" id="cd04413">
    <property type="entry name" value="NDPk_I"/>
    <property type="match status" value="1"/>
</dbReference>
<dbReference type="FunFam" id="3.30.70.141:FF:000003">
    <property type="entry name" value="Nucleoside diphosphate kinase"/>
    <property type="match status" value="1"/>
</dbReference>
<dbReference type="Gene3D" id="3.30.70.141">
    <property type="entry name" value="Nucleoside diphosphate kinase-like domain"/>
    <property type="match status" value="1"/>
</dbReference>
<dbReference type="HAMAP" id="MF_00451">
    <property type="entry name" value="NDP_kinase"/>
    <property type="match status" value="1"/>
</dbReference>
<dbReference type="InterPro" id="IPR034907">
    <property type="entry name" value="NDK-like_dom"/>
</dbReference>
<dbReference type="InterPro" id="IPR036850">
    <property type="entry name" value="NDK-like_dom_sf"/>
</dbReference>
<dbReference type="InterPro" id="IPR001564">
    <property type="entry name" value="Nucleoside_diP_kinase"/>
</dbReference>
<dbReference type="InterPro" id="IPR023005">
    <property type="entry name" value="Nucleoside_diP_kinase_AS"/>
</dbReference>
<dbReference type="NCBIfam" id="NF001908">
    <property type="entry name" value="PRK00668.1"/>
    <property type="match status" value="1"/>
</dbReference>
<dbReference type="PANTHER" id="PTHR46161">
    <property type="entry name" value="NUCLEOSIDE DIPHOSPHATE KINASE"/>
    <property type="match status" value="1"/>
</dbReference>
<dbReference type="PANTHER" id="PTHR46161:SF3">
    <property type="entry name" value="NUCLEOSIDE DIPHOSPHATE KINASE DDB_G0292928-RELATED"/>
    <property type="match status" value="1"/>
</dbReference>
<dbReference type="Pfam" id="PF00334">
    <property type="entry name" value="NDK"/>
    <property type="match status" value="1"/>
</dbReference>
<dbReference type="PRINTS" id="PR01243">
    <property type="entry name" value="NUCDPKINASE"/>
</dbReference>
<dbReference type="SMART" id="SM00562">
    <property type="entry name" value="NDK"/>
    <property type="match status" value="1"/>
</dbReference>
<dbReference type="SUPFAM" id="SSF54919">
    <property type="entry name" value="Nucleoside diphosphate kinase, NDK"/>
    <property type="match status" value="1"/>
</dbReference>
<dbReference type="PROSITE" id="PS00469">
    <property type="entry name" value="NDPK"/>
    <property type="match status" value="1"/>
</dbReference>
<dbReference type="PROSITE" id="PS51374">
    <property type="entry name" value="NDPK_LIKE"/>
    <property type="match status" value="1"/>
</dbReference>
<organism>
    <name type="scientific">Cereibacter sphaeroides (strain KD131 / KCTC 12085)</name>
    <name type="common">Rhodobacter sphaeroides</name>
    <dbReference type="NCBI Taxonomy" id="557760"/>
    <lineage>
        <taxon>Bacteria</taxon>
        <taxon>Pseudomonadati</taxon>
        <taxon>Pseudomonadota</taxon>
        <taxon>Alphaproteobacteria</taxon>
        <taxon>Rhodobacterales</taxon>
        <taxon>Paracoccaceae</taxon>
        <taxon>Cereibacter</taxon>
    </lineage>
</organism>
<gene>
    <name evidence="1" type="primary">ndk</name>
    <name type="ordered locus">RSKD131_1210</name>
</gene>
<keyword id="KW-0067">ATP-binding</keyword>
<keyword id="KW-0963">Cytoplasm</keyword>
<keyword id="KW-0418">Kinase</keyword>
<keyword id="KW-0460">Magnesium</keyword>
<keyword id="KW-0479">Metal-binding</keyword>
<keyword id="KW-0546">Nucleotide metabolism</keyword>
<keyword id="KW-0547">Nucleotide-binding</keyword>
<keyword id="KW-0597">Phosphoprotein</keyword>
<keyword id="KW-0808">Transferase</keyword>
<name>NDK_CERSK</name>
<evidence type="ECO:0000255" key="1">
    <source>
        <dbReference type="HAMAP-Rule" id="MF_00451"/>
    </source>
</evidence>
<comment type="function">
    <text evidence="1">Major role in the synthesis of nucleoside triphosphates other than ATP. The ATP gamma phosphate is transferred to the NDP beta phosphate via a ping-pong mechanism, using a phosphorylated active-site intermediate.</text>
</comment>
<comment type="catalytic activity">
    <reaction evidence="1">
        <text>a 2'-deoxyribonucleoside 5'-diphosphate + ATP = a 2'-deoxyribonucleoside 5'-triphosphate + ADP</text>
        <dbReference type="Rhea" id="RHEA:44640"/>
        <dbReference type="ChEBI" id="CHEBI:30616"/>
        <dbReference type="ChEBI" id="CHEBI:61560"/>
        <dbReference type="ChEBI" id="CHEBI:73316"/>
        <dbReference type="ChEBI" id="CHEBI:456216"/>
        <dbReference type="EC" id="2.7.4.6"/>
    </reaction>
</comment>
<comment type="catalytic activity">
    <reaction evidence="1">
        <text>a ribonucleoside 5'-diphosphate + ATP = a ribonucleoside 5'-triphosphate + ADP</text>
        <dbReference type="Rhea" id="RHEA:18113"/>
        <dbReference type="ChEBI" id="CHEBI:30616"/>
        <dbReference type="ChEBI" id="CHEBI:57930"/>
        <dbReference type="ChEBI" id="CHEBI:61557"/>
        <dbReference type="ChEBI" id="CHEBI:456216"/>
        <dbReference type="EC" id="2.7.4.6"/>
    </reaction>
</comment>
<comment type="cofactor">
    <cofactor evidence="1">
        <name>Mg(2+)</name>
        <dbReference type="ChEBI" id="CHEBI:18420"/>
    </cofactor>
</comment>
<comment type="subunit">
    <text evidence="1">Homotetramer.</text>
</comment>
<comment type="subcellular location">
    <subcellularLocation>
        <location evidence="1">Cytoplasm</location>
    </subcellularLocation>
</comment>
<comment type="similarity">
    <text evidence="1">Belongs to the NDK family.</text>
</comment>
<accession>B9KSS4</accession>
<proteinExistence type="inferred from homology"/>
<reference key="1">
    <citation type="journal article" date="2009" name="J. Bacteriol.">
        <title>Complete genome sequence of Rhodobacter sphaeroides KD131.</title>
        <authorList>
            <person name="Lim S.-K."/>
            <person name="Kim S.J."/>
            <person name="Cha S.H."/>
            <person name="Oh Y.-K."/>
            <person name="Rhee H.-J."/>
            <person name="Kim M.-S."/>
            <person name="Lee J.K."/>
        </authorList>
    </citation>
    <scope>NUCLEOTIDE SEQUENCE [LARGE SCALE GENOMIC DNA]</scope>
    <source>
        <strain>KD131 / KCTC 12085</strain>
    </source>
</reference>
<sequence>MAIERTLSIIKPDATRRNLTGKINAKFEEAGLRIVAQKRIHLSLAQAQKFYGVHKDRPFFGELTEFMASEPVVVQVLEGEGAIAKNREVMGATNPANADAGTIRKEFALSVGENSVHGSDAPETAAEEIAFFFSGLELVG</sequence>
<feature type="chain" id="PRO_1000192287" description="Nucleoside diphosphate kinase">
    <location>
        <begin position="1"/>
        <end position="140"/>
    </location>
</feature>
<feature type="active site" description="Pros-phosphohistidine intermediate" evidence="1">
    <location>
        <position position="117"/>
    </location>
</feature>
<feature type="binding site" evidence="1">
    <location>
        <position position="11"/>
    </location>
    <ligand>
        <name>ATP</name>
        <dbReference type="ChEBI" id="CHEBI:30616"/>
    </ligand>
</feature>
<feature type="binding site" evidence="1">
    <location>
        <position position="59"/>
    </location>
    <ligand>
        <name>ATP</name>
        <dbReference type="ChEBI" id="CHEBI:30616"/>
    </ligand>
</feature>
<feature type="binding site" evidence="1">
    <location>
        <position position="87"/>
    </location>
    <ligand>
        <name>ATP</name>
        <dbReference type="ChEBI" id="CHEBI:30616"/>
    </ligand>
</feature>
<feature type="binding site" evidence="1">
    <location>
        <position position="93"/>
    </location>
    <ligand>
        <name>ATP</name>
        <dbReference type="ChEBI" id="CHEBI:30616"/>
    </ligand>
</feature>
<feature type="binding site" evidence="1">
    <location>
        <position position="104"/>
    </location>
    <ligand>
        <name>ATP</name>
        <dbReference type="ChEBI" id="CHEBI:30616"/>
    </ligand>
</feature>
<feature type="binding site" evidence="1">
    <location>
        <position position="114"/>
    </location>
    <ligand>
        <name>ATP</name>
        <dbReference type="ChEBI" id="CHEBI:30616"/>
    </ligand>
</feature>